<gene>
    <name evidence="1" type="primary">rplT</name>
    <name type="ordered locus">AMF_043</name>
</gene>
<keyword id="KW-1185">Reference proteome</keyword>
<keyword id="KW-0687">Ribonucleoprotein</keyword>
<keyword id="KW-0689">Ribosomal protein</keyword>
<keyword id="KW-0694">RNA-binding</keyword>
<keyword id="KW-0699">rRNA-binding</keyword>
<evidence type="ECO:0000255" key="1">
    <source>
        <dbReference type="HAMAP-Rule" id="MF_00382"/>
    </source>
</evidence>
<evidence type="ECO:0000305" key="2"/>
<proteinExistence type="inferred from homology"/>
<protein>
    <recommendedName>
        <fullName evidence="1">Large ribosomal subunit protein bL20</fullName>
    </recommendedName>
    <alternativeName>
        <fullName evidence="2">50S ribosomal protein L20</fullName>
    </alternativeName>
</protein>
<name>RL20_ANAMF</name>
<dbReference type="EMBL" id="CP001079">
    <property type="protein sequence ID" value="ACM48937.1"/>
    <property type="molecule type" value="Genomic_DNA"/>
</dbReference>
<dbReference type="RefSeq" id="WP_010262430.1">
    <property type="nucleotide sequence ID" value="NZ_AFMS01000054.1"/>
</dbReference>
<dbReference type="SMR" id="B9KHH5"/>
<dbReference type="STRING" id="320483.AMF_043"/>
<dbReference type="GeneID" id="7398762"/>
<dbReference type="KEGG" id="amf:AMF_043"/>
<dbReference type="eggNOG" id="COG0292">
    <property type="taxonomic scope" value="Bacteria"/>
</dbReference>
<dbReference type="HOGENOM" id="CLU_123265_0_1_5"/>
<dbReference type="Proteomes" id="UP000007307">
    <property type="component" value="Chromosome"/>
</dbReference>
<dbReference type="GO" id="GO:1990904">
    <property type="term" value="C:ribonucleoprotein complex"/>
    <property type="evidence" value="ECO:0007669"/>
    <property type="project" value="UniProtKB-KW"/>
</dbReference>
<dbReference type="GO" id="GO:0005840">
    <property type="term" value="C:ribosome"/>
    <property type="evidence" value="ECO:0007669"/>
    <property type="project" value="UniProtKB-KW"/>
</dbReference>
<dbReference type="GO" id="GO:0019843">
    <property type="term" value="F:rRNA binding"/>
    <property type="evidence" value="ECO:0007669"/>
    <property type="project" value="UniProtKB-UniRule"/>
</dbReference>
<dbReference type="GO" id="GO:0003735">
    <property type="term" value="F:structural constituent of ribosome"/>
    <property type="evidence" value="ECO:0007669"/>
    <property type="project" value="InterPro"/>
</dbReference>
<dbReference type="GO" id="GO:0000027">
    <property type="term" value="P:ribosomal large subunit assembly"/>
    <property type="evidence" value="ECO:0007669"/>
    <property type="project" value="UniProtKB-UniRule"/>
</dbReference>
<dbReference type="GO" id="GO:0006412">
    <property type="term" value="P:translation"/>
    <property type="evidence" value="ECO:0007669"/>
    <property type="project" value="InterPro"/>
</dbReference>
<dbReference type="CDD" id="cd07026">
    <property type="entry name" value="Ribosomal_L20"/>
    <property type="match status" value="1"/>
</dbReference>
<dbReference type="FunFam" id="1.10.1900.20:FF:000001">
    <property type="entry name" value="50S ribosomal protein L20"/>
    <property type="match status" value="1"/>
</dbReference>
<dbReference type="Gene3D" id="6.10.160.10">
    <property type="match status" value="1"/>
</dbReference>
<dbReference type="Gene3D" id="1.10.1900.20">
    <property type="entry name" value="Ribosomal protein L20"/>
    <property type="match status" value="1"/>
</dbReference>
<dbReference type="HAMAP" id="MF_00382">
    <property type="entry name" value="Ribosomal_bL20"/>
    <property type="match status" value="1"/>
</dbReference>
<dbReference type="InterPro" id="IPR005813">
    <property type="entry name" value="Ribosomal_bL20"/>
</dbReference>
<dbReference type="InterPro" id="IPR049946">
    <property type="entry name" value="RIBOSOMAL_L20_CS"/>
</dbReference>
<dbReference type="InterPro" id="IPR035566">
    <property type="entry name" value="Ribosomal_protein_bL20_C"/>
</dbReference>
<dbReference type="NCBIfam" id="TIGR01032">
    <property type="entry name" value="rplT_bact"/>
    <property type="match status" value="1"/>
</dbReference>
<dbReference type="PANTHER" id="PTHR10986">
    <property type="entry name" value="39S RIBOSOMAL PROTEIN L20"/>
    <property type="match status" value="1"/>
</dbReference>
<dbReference type="Pfam" id="PF00453">
    <property type="entry name" value="Ribosomal_L20"/>
    <property type="match status" value="1"/>
</dbReference>
<dbReference type="PRINTS" id="PR00062">
    <property type="entry name" value="RIBOSOMALL20"/>
</dbReference>
<dbReference type="SUPFAM" id="SSF74731">
    <property type="entry name" value="Ribosomal protein L20"/>
    <property type="match status" value="1"/>
</dbReference>
<dbReference type="PROSITE" id="PS00937">
    <property type="entry name" value="RIBOSOMAL_L20"/>
    <property type="match status" value="1"/>
</dbReference>
<organism>
    <name type="scientific">Anaplasma marginale (strain Florida)</name>
    <dbReference type="NCBI Taxonomy" id="320483"/>
    <lineage>
        <taxon>Bacteria</taxon>
        <taxon>Pseudomonadati</taxon>
        <taxon>Pseudomonadota</taxon>
        <taxon>Alphaproteobacteria</taxon>
        <taxon>Rickettsiales</taxon>
        <taxon>Anaplasmataceae</taxon>
        <taxon>Anaplasma</taxon>
    </lineage>
</organism>
<reference key="1">
    <citation type="journal article" date="2009" name="BMC Genomics">
        <title>Conservation in the face of diversity: multistrain analysis of an intracellular bacterium.</title>
        <authorList>
            <person name="Dark M.J."/>
            <person name="Herndon D.R."/>
            <person name="Kappmeyer L.S."/>
            <person name="Gonzales M.P."/>
            <person name="Nordeen E."/>
            <person name="Palmer G.H."/>
            <person name="Knowles D.P. Jr."/>
            <person name="Brayton K.A."/>
        </authorList>
    </citation>
    <scope>NUCLEOTIDE SEQUENCE [LARGE SCALE GENOMIC DNA]</scope>
    <source>
        <strain>Florida</strain>
    </source>
</reference>
<comment type="function">
    <text evidence="1">Binds directly to 23S ribosomal RNA and is necessary for the in vitro assembly process of the 50S ribosomal subunit. It is not involved in the protein synthesizing functions of that subunit.</text>
</comment>
<comment type="similarity">
    <text evidence="1">Belongs to the bacterial ribosomal protein bL20 family.</text>
</comment>
<accession>B9KHH5</accession>
<feature type="chain" id="PRO_1000193933" description="Large ribosomal subunit protein bL20">
    <location>
        <begin position="1"/>
        <end position="128"/>
    </location>
</feature>
<sequence length="128" mass="14623">MARVKRGVTARARHKKVVALAKGYRGRSKNCYRAALQRLEKALVYAYRDRRNRKRDFRRLWIVRINAAARQWGIKYSQLMKGMALCGIELNRKMLAEMAVNDKAAFEKVVSAVAGTCGYACAVNQQDK</sequence>